<evidence type="ECO:0000255" key="1">
    <source>
        <dbReference type="HAMAP-Rule" id="MF_01200"/>
    </source>
</evidence>
<gene>
    <name evidence="1" type="primary">pyrF</name>
    <name type="ordered locus">SPs1237</name>
</gene>
<accession>P0DC81</accession>
<accession>Q8K7V3</accession>
<proteinExistence type="inferred from homology"/>
<reference key="1">
    <citation type="journal article" date="2003" name="Genome Res.">
        <title>Genome sequence of an M3 strain of Streptococcus pyogenes reveals a large-scale genomic rearrangement in invasive strains and new insights into phage evolution.</title>
        <authorList>
            <person name="Nakagawa I."/>
            <person name="Kurokawa K."/>
            <person name="Yamashita A."/>
            <person name="Nakata M."/>
            <person name="Tomiyasu Y."/>
            <person name="Okahashi N."/>
            <person name="Kawabata S."/>
            <person name="Yamazaki K."/>
            <person name="Shiba T."/>
            <person name="Yasunaga T."/>
            <person name="Hayashi H."/>
            <person name="Hattori M."/>
            <person name="Hamada S."/>
        </authorList>
    </citation>
    <scope>NUCLEOTIDE SEQUENCE [LARGE SCALE GENOMIC DNA]</scope>
    <source>
        <strain>SSI-1</strain>
    </source>
</reference>
<keyword id="KW-0210">Decarboxylase</keyword>
<keyword id="KW-0456">Lyase</keyword>
<keyword id="KW-0665">Pyrimidine biosynthesis</keyword>
<dbReference type="EC" id="4.1.1.23" evidence="1"/>
<dbReference type="EMBL" id="BA000034">
    <property type="protein sequence ID" value="BAC64332.1"/>
    <property type="molecule type" value="Genomic_DNA"/>
</dbReference>
<dbReference type="RefSeq" id="WP_002990139.1">
    <property type="nucleotide sequence ID" value="NC_004606.1"/>
</dbReference>
<dbReference type="SMR" id="P0DC81"/>
<dbReference type="GeneID" id="69900998"/>
<dbReference type="KEGG" id="sps:SPs1237"/>
<dbReference type="HOGENOM" id="CLU_067069_1_1_9"/>
<dbReference type="UniPathway" id="UPA00070">
    <property type="reaction ID" value="UER00120"/>
</dbReference>
<dbReference type="GO" id="GO:0005829">
    <property type="term" value="C:cytosol"/>
    <property type="evidence" value="ECO:0007669"/>
    <property type="project" value="TreeGrafter"/>
</dbReference>
<dbReference type="GO" id="GO:0004590">
    <property type="term" value="F:orotidine-5'-phosphate decarboxylase activity"/>
    <property type="evidence" value="ECO:0007669"/>
    <property type="project" value="UniProtKB-UniRule"/>
</dbReference>
<dbReference type="GO" id="GO:0006207">
    <property type="term" value="P:'de novo' pyrimidine nucleobase biosynthetic process"/>
    <property type="evidence" value="ECO:0007669"/>
    <property type="project" value="InterPro"/>
</dbReference>
<dbReference type="GO" id="GO:0044205">
    <property type="term" value="P:'de novo' UMP biosynthetic process"/>
    <property type="evidence" value="ECO:0007669"/>
    <property type="project" value="UniProtKB-UniRule"/>
</dbReference>
<dbReference type="CDD" id="cd04725">
    <property type="entry name" value="OMP_decarboxylase_like"/>
    <property type="match status" value="1"/>
</dbReference>
<dbReference type="FunFam" id="3.20.20.70:FF:000015">
    <property type="entry name" value="Orotidine 5'-phosphate decarboxylase"/>
    <property type="match status" value="1"/>
</dbReference>
<dbReference type="Gene3D" id="3.20.20.70">
    <property type="entry name" value="Aldolase class I"/>
    <property type="match status" value="1"/>
</dbReference>
<dbReference type="HAMAP" id="MF_01200_B">
    <property type="entry name" value="OMPdecase_type1_B"/>
    <property type="match status" value="1"/>
</dbReference>
<dbReference type="InterPro" id="IPR013785">
    <property type="entry name" value="Aldolase_TIM"/>
</dbReference>
<dbReference type="InterPro" id="IPR014732">
    <property type="entry name" value="OMPdecase"/>
</dbReference>
<dbReference type="InterPro" id="IPR018089">
    <property type="entry name" value="OMPdecase_AS"/>
</dbReference>
<dbReference type="InterPro" id="IPR047596">
    <property type="entry name" value="OMPdecase_bac"/>
</dbReference>
<dbReference type="InterPro" id="IPR001754">
    <property type="entry name" value="OMPdeCOase_dom"/>
</dbReference>
<dbReference type="InterPro" id="IPR011060">
    <property type="entry name" value="RibuloseP-bd_barrel"/>
</dbReference>
<dbReference type="NCBIfam" id="NF001273">
    <property type="entry name" value="PRK00230.1"/>
    <property type="match status" value="1"/>
</dbReference>
<dbReference type="NCBIfam" id="TIGR01740">
    <property type="entry name" value="pyrF"/>
    <property type="match status" value="1"/>
</dbReference>
<dbReference type="PANTHER" id="PTHR32119">
    <property type="entry name" value="OROTIDINE 5'-PHOSPHATE DECARBOXYLASE"/>
    <property type="match status" value="1"/>
</dbReference>
<dbReference type="PANTHER" id="PTHR32119:SF2">
    <property type="entry name" value="OROTIDINE 5'-PHOSPHATE DECARBOXYLASE"/>
    <property type="match status" value="1"/>
</dbReference>
<dbReference type="Pfam" id="PF00215">
    <property type="entry name" value="OMPdecase"/>
    <property type="match status" value="1"/>
</dbReference>
<dbReference type="SMART" id="SM00934">
    <property type="entry name" value="OMPdecase"/>
    <property type="match status" value="1"/>
</dbReference>
<dbReference type="SUPFAM" id="SSF51366">
    <property type="entry name" value="Ribulose-phoshate binding barrel"/>
    <property type="match status" value="1"/>
</dbReference>
<dbReference type="PROSITE" id="PS00156">
    <property type="entry name" value="OMPDECASE"/>
    <property type="match status" value="1"/>
</dbReference>
<comment type="function">
    <text evidence="1">Catalyzes the decarboxylation of orotidine 5'-monophosphate (OMP) to uridine 5'-monophosphate (UMP).</text>
</comment>
<comment type="catalytic activity">
    <reaction evidence="1">
        <text>orotidine 5'-phosphate + H(+) = UMP + CO2</text>
        <dbReference type="Rhea" id="RHEA:11596"/>
        <dbReference type="ChEBI" id="CHEBI:15378"/>
        <dbReference type="ChEBI" id="CHEBI:16526"/>
        <dbReference type="ChEBI" id="CHEBI:57538"/>
        <dbReference type="ChEBI" id="CHEBI:57865"/>
        <dbReference type="EC" id="4.1.1.23"/>
    </reaction>
</comment>
<comment type="pathway">
    <text evidence="1">Pyrimidine metabolism; UMP biosynthesis via de novo pathway; UMP from orotate: step 2/2.</text>
</comment>
<comment type="subunit">
    <text evidence="1">Homodimer.</text>
</comment>
<comment type="similarity">
    <text evidence="1">Belongs to the OMP decarboxylase family. Type 1 subfamily.</text>
</comment>
<sequence>MKEERPIIALDFSSFEETKAFLDLFPAEEKLYVKIGMELYYAQGPDIVRSIKSLGHNVFLDLKLHDIPNTVRAAMAVLKELDIDMATVHAAGGVEMLKAAREGLGQGPTLIAVTQLTSTSEDQMRGDQNIQTSLLESVLHYSKGAAKAQLDGVVCSAQEVEAIKAVTPTGFTCLTPGIRPKGSNIGDQKRVMTPNQARRIGSDYIVVGRPITQAKDPVAAYQAIKAEWAG</sequence>
<name>PYRF_STRPQ</name>
<feature type="chain" id="PRO_0000411428" description="Orotidine 5'-phosphate decarboxylase">
    <location>
        <begin position="1"/>
        <end position="230"/>
    </location>
</feature>
<feature type="active site" description="Proton donor" evidence="1">
    <location>
        <position position="63"/>
    </location>
</feature>
<feature type="binding site" evidence="1">
    <location>
        <position position="11"/>
    </location>
    <ligand>
        <name>substrate</name>
    </ligand>
</feature>
<feature type="binding site" evidence="1">
    <location>
        <position position="34"/>
    </location>
    <ligand>
        <name>substrate</name>
    </ligand>
</feature>
<feature type="binding site" evidence="1">
    <location>
        <begin position="61"/>
        <end position="70"/>
    </location>
    <ligand>
        <name>substrate</name>
    </ligand>
</feature>
<feature type="binding site" evidence="1">
    <location>
        <position position="117"/>
    </location>
    <ligand>
        <name>substrate</name>
    </ligand>
</feature>
<feature type="binding site" evidence="1">
    <location>
        <position position="179"/>
    </location>
    <ligand>
        <name>substrate</name>
    </ligand>
</feature>
<feature type="binding site" evidence="1">
    <location>
        <position position="188"/>
    </location>
    <ligand>
        <name>substrate</name>
    </ligand>
</feature>
<feature type="binding site" evidence="1">
    <location>
        <position position="208"/>
    </location>
    <ligand>
        <name>substrate</name>
    </ligand>
</feature>
<feature type="binding site" evidence="1">
    <location>
        <position position="209"/>
    </location>
    <ligand>
        <name>substrate</name>
    </ligand>
</feature>
<protein>
    <recommendedName>
        <fullName evidence="1">Orotidine 5'-phosphate decarboxylase</fullName>
        <ecNumber evidence="1">4.1.1.23</ecNumber>
    </recommendedName>
    <alternativeName>
        <fullName evidence="1">OMP decarboxylase</fullName>
        <shortName evidence="1">OMPDCase</shortName>
        <shortName evidence="1">OMPdecase</shortName>
    </alternativeName>
</protein>
<organism>
    <name type="scientific">Streptococcus pyogenes serotype M3 (strain SSI-1)</name>
    <dbReference type="NCBI Taxonomy" id="193567"/>
    <lineage>
        <taxon>Bacteria</taxon>
        <taxon>Bacillati</taxon>
        <taxon>Bacillota</taxon>
        <taxon>Bacilli</taxon>
        <taxon>Lactobacillales</taxon>
        <taxon>Streptococcaceae</taxon>
        <taxon>Streptococcus</taxon>
    </lineage>
</organism>